<accession>P37939</accession>
<proteinExistence type="inferred from homology"/>
<evidence type="ECO:0000255" key="1">
    <source>
        <dbReference type="HAMAP-Rule" id="MF_00564"/>
    </source>
</evidence>
<reference key="1">
    <citation type="submission" date="1994-03" db="EMBL/GenBank/DDBJ databases">
        <authorList>
            <person name="Smith D.R."/>
            <person name="Robison K."/>
        </authorList>
    </citation>
    <scope>NUCLEOTIDE SEQUENCE [GENOMIC DNA]</scope>
</reference>
<reference key="2">
    <citation type="journal article" date="2001" name="Nature">
        <title>Massive gene decay in the leprosy bacillus.</title>
        <authorList>
            <person name="Cole S.T."/>
            <person name="Eiglmeier K."/>
            <person name="Parkhill J."/>
            <person name="James K.D."/>
            <person name="Thomson N.R."/>
            <person name="Wheeler P.R."/>
            <person name="Honore N."/>
            <person name="Garnier T."/>
            <person name="Churcher C.M."/>
            <person name="Harris D.E."/>
            <person name="Mungall K.L."/>
            <person name="Basham D."/>
            <person name="Brown D."/>
            <person name="Chillingworth T."/>
            <person name="Connor R."/>
            <person name="Davies R.M."/>
            <person name="Devlin K."/>
            <person name="Duthoy S."/>
            <person name="Feltwell T."/>
            <person name="Fraser A."/>
            <person name="Hamlin N."/>
            <person name="Holroyd S."/>
            <person name="Hornsby T."/>
            <person name="Jagels K."/>
            <person name="Lacroix C."/>
            <person name="Maclean J."/>
            <person name="Moule S."/>
            <person name="Murphy L.D."/>
            <person name="Oliver K."/>
            <person name="Quail M.A."/>
            <person name="Rajandream M.A."/>
            <person name="Rutherford K.M."/>
            <person name="Rutter S."/>
            <person name="Seeger K."/>
            <person name="Simon S."/>
            <person name="Simmonds M."/>
            <person name="Skelton J."/>
            <person name="Squares R."/>
            <person name="Squares S."/>
            <person name="Stevens K."/>
            <person name="Taylor K."/>
            <person name="Whitehead S."/>
            <person name="Woodward J.R."/>
            <person name="Barrell B.G."/>
        </authorList>
    </citation>
    <scope>NUCLEOTIDE SEQUENCE [LARGE SCALE GENOMIC DNA]</scope>
    <source>
        <strain>TN</strain>
    </source>
</reference>
<keyword id="KW-0548">Nucleotidyltransferase</keyword>
<keyword id="KW-1185">Reference proteome</keyword>
<keyword id="KW-0694">RNA-binding</keyword>
<keyword id="KW-0698">rRNA processing</keyword>
<keyword id="KW-0808">Transferase</keyword>
<keyword id="KW-0819">tRNA processing</keyword>
<keyword id="KW-0820">tRNA-binding</keyword>
<dbReference type="EC" id="2.7.7.56" evidence="1"/>
<dbReference type="EMBL" id="U00014">
    <property type="protein sequence ID" value="AAA50880.1"/>
    <property type="molecule type" value="Genomic_DNA"/>
</dbReference>
<dbReference type="EMBL" id="AL583921">
    <property type="protein sequence ID" value="CAC31555.1"/>
    <property type="molecule type" value="Genomic_DNA"/>
</dbReference>
<dbReference type="PIR" id="S72788">
    <property type="entry name" value="S72788"/>
</dbReference>
<dbReference type="RefSeq" id="NP_301856.1">
    <property type="nucleotide sequence ID" value="NC_002677.1"/>
</dbReference>
<dbReference type="RefSeq" id="WP_010908180.1">
    <property type="nucleotide sequence ID" value="NC_002677.1"/>
</dbReference>
<dbReference type="SMR" id="P37939"/>
<dbReference type="STRING" id="272631.gene:17575004"/>
<dbReference type="KEGG" id="mle:ML1174"/>
<dbReference type="PATRIC" id="fig|272631.5.peg.2131"/>
<dbReference type="Leproma" id="ML1174"/>
<dbReference type="eggNOG" id="COG0689">
    <property type="taxonomic scope" value="Bacteria"/>
</dbReference>
<dbReference type="HOGENOM" id="CLU_050858_0_0_11"/>
<dbReference type="OrthoDB" id="9802265at2"/>
<dbReference type="Proteomes" id="UP000000806">
    <property type="component" value="Chromosome"/>
</dbReference>
<dbReference type="GO" id="GO:0000175">
    <property type="term" value="F:3'-5'-RNA exonuclease activity"/>
    <property type="evidence" value="ECO:0007669"/>
    <property type="project" value="UniProtKB-UniRule"/>
</dbReference>
<dbReference type="GO" id="GO:0000049">
    <property type="term" value="F:tRNA binding"/>
    <property type="evidence" value="ECO:0007669"/>
    <property type="project" value="UniProtKB-UniRule"/>
</dbReference>
<dbReference type="GO" id="GO:0009022">
    <property type="term" value="F:tRNA nucleotidyltransferase activity"/>
    <property type="evidence" value="ECO:0007669"/>
    <property type="project" value="UniProtKB-UniRule"/>
</dbReference>
<dbReference type="GO" id="GO:0016075">
    <property type="term" value="P:rRNA catabolic process"/>
    <property type="evidence" value="ECO:0007669"/>
    <property type="project" value="UniProtKB-UniRule"/>
</dbReference>
<dbReference type="GO" id="GO:0006364">
    <property type="term" value="P:rRNA processing"/>
    <property type="evidence" value="ECO:0007669"/>
    <property type="project" value="UniProtKB-KW"/>
</dbReference>
<dbReference type="GO" id="GO:0008033">
    <property type="term" value="P:tRNA processing"/>
    <property type="evidence" value="ECO:0007669"/>
    <property type="project" value="UniProtKB-UniRule"/>
</dbReference>
<dbReference type="CDD" id="cd11362">
    <property type="entry name" value="RNase_PH_bact"/>
    <property type="match status" value="1"/>
</dbReference>
<dbReference type="FunFam" id="3.30.230.70:FF:000003">
    <property type="entry name" value="Ribonuclease PH"/>
    <property type="match status" value="1"/>
</dbReference>
<dbReference type="Gene3D" id="3.30.230.70">
    <property type="entry name" value="GHMP Kinase, N-terminal domain"/>
    <property type="match status" value="1"/>
</dbReference>
<dbReference type="HAMAP" id="MF_00564">
    <property type="entry name" value="RNase_PH"/>
    <property type="match status" value="1"/>
</dbReference>
<dbReference type="InterPro" id="IPR001247">
    <property type="entry name" value="ExoRNase_PH_dom1"/>
</dbReference>
<dbReference type="InterPro" id="IPR015847">
    <property type="entry name" value="ExoRNase_PH_dom2"/>
</dbReference>
<dbReference type="InterPro" id="IPR036345">
    <property type="entry name" value="ExoRNase_PH_dom2_sf"/>
</dbReference>
<dbReference type="InterPro" id="IPR027408">
    <property type="entry name" value="PNPase/RNase_PH_dom_sf"/>
</dbReference>
<dbReference type="InterPro" id="IPR020568">
    <property type="entry name" value="Ribosomal_Su5_D2-typ_SF"/>
</dbReference>
<dbReference type="InterPro" id="IPR050080">
    <property type="entry name" value="RNase_PH"/>
</dbReference>
<dbReference type="InterPro" id="IPR002381">
    <property type="entry name" value="RNase_PH_bac-type"/>
</dbReference>
<dbReference type="InterPro" id="IPR018336">
    <property type="entry name" value="RNase_PH_CS"/>
</dbReference>
<dbReference type="NCBIfam" id="TIGR01966">
    <property type="entry name" value="RNasePH"/>
    <property type="match status" value="1"/>
</dbReference>
<dbReference type="PANTHER" id="PTHR11953">
    <property type="entry name" value="EXOSOME COMPLEX COMPONENT"/>
    <property type="match status" value="1"/>
</dbReference>
<dbReference type="PANTHER" id="PTHR11953:SF0">
    <property type="entry name" value="EXOSOME COMPLEX COMPONENT RRP41"/>
    <property type="match status" value="1"/>
</dbReference>
<dbReference type="Pfam" id="PF01138">
    <property type="entry name" value="RNase_PH"/>
    <property type="match status" value="1"/>
</dbReference>
<dbReference type="Pfam" id="PF03725">
    <property type="entry name" value="RNase_PH_C"/>
    <property type="match status" value="1"/>
</dbReference>
<dbReference type="SUPFAM" id="SSF55666">
    <property type="entry name" value="Ribonuclease PH domain 2-like"/>
    <property type="match status" value="1"/>
</dbReference>
<dbReference type="SUPFAM" id="SSF54211">
    <property type="entry name" value="Ribosomal protein S5 domain 2-like"/>
    <property type="match status" value="1"/>
</dbReference>
<dbReference type="PROSITE" id="PS01277">
    <property type="entry name" value="RIBONUCLEASE_PH"/>
    <property type="match status" value="1"/>
</dbReference>
<comment type="function">
    <text evidence="1">Phosphorolytic 3'-5' exoribonuclease that plays an important role in tRNA 3'-end maturation. Removes nucleotide residues following the 3'-CCA terminus of tRNAs; can also add nucleotides to the ends of RNA molecules by using nucleoside diphosphates as substrates, but this may not be physiologically important. Probably plays a role in initiation of 16S rRNA degradation (leading to ribosome degradation) during starvation.</text>
</comment>
<comment type="catalytic activity">
    <reaction evidence="1">
        <text>tRNA(n+1) + phosphate = tRNA(n) + a ribonucleoside 5'-diphosphate</text>
        <dbReference type="Rhea" id="RHEA:10628"/>
        <dbReference type="Rhea" id="RHEA-COMP:17343"/>
        <dbReference type="Rhea" id="RHEA-COMP:17344"/>
        <dbReference type="ChEBI" id="CHEBI:43474"/>
        <dbReference type="ChEBI" id="CHEBI:57930"/>
        <dbReference type="ChEBI" id="CHEBI:173114"/>
        <dbReference type="EC" id="2.7.7.56"/>
    </reaction>
</comment>
<comment type="subunit">
    <text evidence="1">Homohexameric ring arranged as a trimer of dimers.</text>
</comment>
<comment type="similarity">
    <text evidence="1">Belongs to the RNase PH family.</text>
</comment>
<organism>
    <name type="scientific">Mycobacterium leprae (strain TN)</name>
    <dbReference type="NCBI Taxonomy" id="272631"/>
    <lineage>
        <taxon>Bacteria</taxon>
        <taxon>Bacillati</taxon>
        <taxon>Actinomycetota</taxon>
        <taxon>Actinomycetes</taxon>
        <taxon>Mycobacteriales</taxon>
        <taxon>Mycobacteriaceae</taxon>
        <taxon>Mycobacterium</taxon>
    </lineage>
</organism>
<gene>
    <name evidence="1" type="primary">rph</name>
    <name type="synonym">rnpH</name>
    <name type="synonym">rphA</name>
    <name type="ordered locus">ML1174</name>
    <name type="ORF">B1549_C1_182</name>
</gene>
<protein>
    <recommendedName>
        <fullName evidence="1">Ribonuclease PH</fullName>
        <shortName evidence="1">RNase PH</shortName>
        <ecNumber evidence="1">2.7.7.56</ecNumber>
    </recommendedName>
    <alternativeName>
        <fullName evidence="1">tRNA nucleotidyltransferase</fullName>
    </alternativeName>
</protein>
<sequence length="259" mass="27365">MSTRADGRLDDELRAVVITRGFTEHPAGSVLIEFGHTKVMCTASPTEGVPRWRKGSGKGWLTAEYAMLPSATHTRSERESVKGRLSGRTQEISRLIGRSLRACIDLAALGENTIAVDCDVLQADGGTRTAAVTGAYVALADAVTYLSAAGRLLDPRPLSCAIAAVSVGVVDGRIRVDLSYEEDSRAEVDMNVIATDTGTLVEIQGTGEGATFPRSTLDKLLDMALGACDKLFVAQRDALALPYQGMSPEGPPPPKAFGS</sequence>
<name>RNPH_MYCLE</name>
<feature type="chain" id="PRO_0000139910" description="Ribonuclease PH">
    <location>
        <begin position="1"/>
        <end position="259"/>
    </location>
</feature>
<feature type="binding site" evidence="1">
    <location>
        <position position="88"/>
    </location>
    <ligand>
        <name>phosphate</name>
        <dbReference type="ChEBI" id="CHEBI:43474"/>
        <note>substrate</note>
    </ligand>
</feature>
<feature type="binding site" evidence="1">
    <location>
        <begin position="126"/>
        <end position="128"/>
    </location>
    <ligand>
        <name>phosphate</name>
        <dbReference type="ChEBI" id="CHEBI:43474"/>
        <note>substrate</note>
    </ligand>
</feature>